<reference key="1">
    <citation type="journal article" date="2001" name="Nature">
        <title>Complete genome sequence of Salmonella enterica serovar Typhimurium LT2.</title>
        <authorList>
            <person name="McClelland M."/>
            <person name="Sanderson K.E."/>
            <person name="Spieth J."/>
            <person name="Clifton S.W."/>
            <person name="Latreille P."/>
            <person name="Courtney L."/>
            <person name="Porwollik S."/>
            <person name="Ali J."/>
            <person name="Dante M."/>
            <person name="Du F."/>
            <person name="Hou S."/>
            <person name="Layman D."/>
            <person name="Leonard S."/>
            <person name="Nguyen C."/>
            <person name="Scott K."/>
            <person name="Holmes A."/>
            <person name="Grewal N."/>
            <person name="Mulvaney E."/>
            <person name="Ryan E."/>
            <person name="Sun H."/>
            <person name="Florea L."/>
            <person name="Miller W."/>
            <person name="Stoneking T."/>
            <person name="Nhan M."/>
            <person name="Waterston R."/>
            <person name="Wilson R.K."/>
        </authorList>
    </citation>
    <scope>NUCLEOTIDE SEQUENCE [LARGE SCALE GENOMIC DNA]</scope>
    <source>
        <strain>LT2 / SGSC1412 / ATCC 700720</strain>
    </source>
</reference>
<keyword id="KW-0378">Hydrolase</keyword>
<keyword id="KW-0460">Magnesium</keyword>
<keyword id="KW-0479">Metal-binding</keyword>
<keyword id="KW-0482">Metalloprotease</keyword>
<keyword id="KW-0574">Periplasm</keyword>
<keyword id="KW-0645">Protease</keyword>
<keyword id="KW-1185">Reference proteome</keyword>
<keyword id="KW-0732">Signal</keyword>
<keyword id="KW-0862">Zinc</keyword>
<sequence length="962" mass="107486">MPRSTWFKALLLLVALWGPAVQADIGWQPLQETIRKSDKDTRQYQAIRLDNDMVVLLVSDPQAVKSLSALVVPVGSLEDPEAHQGLAHYLEHMCLMGSKKYPQADSLAEYLKRHGGSHNASTAPYRTAFYLEVENDALPGAVDRLADAIAAPLLNKKYAERERNAVNAELTMARTRDGMRMAQVSAETINPAHPGSHFSGGNLETLSDKPGNPVQQALIAFHEKYYSSNLMKAVIYSNKPLPELASIAAATYGRVPNKQIKKPEITVPVITEAQKGIIIHYVPALPRKVLRVEFRIDNNSAQFRSKTDELVSYLIGNRSPGTLSDWLQKQGLVEGISADSDPIVNGNSGVFAISATLTDKGLANRDEVVAAIFSYLNMLREKGIDKRYFDELAHVLDLDFRYPSITRDMDYVEWLADTMIRVPVAHTLDAANIADRYDPAAIKNRLAMMTPQNARIWYISPQEPHNKTAYFVDAPYQVDKISEQTFKNWQQKAQGIALSLPELNPYIPDDFTLVKNDKNYVRPELIVDKADLRVVYAPSRYFASEPKADVSVVLRNPQAMDSARNQVLFALNDYLAGMALDQLSNQAAVGGISFSTNANNGLMVTANGYTQRLPQLFLALLEGYFSYDATEEQLAQAKSWYTQMMDSAEKGKAYEQAIMPVQMISQVPYFSRDERRALLPSITLKEVMAYRNALKTGARPEFLVIGNMSEAQATSLAQDVQKQLAANGSAWCRNKDVVVEKKQSVIFEKAGSSTDSALAAVFVPVGYDEYVSAAYSAMLGQIVQPWFYNQLRTEEQLGYAVFAFPMSVGRQWGMGFLLQSNDKQPSYLWQRYQAFFPDAEAKLRAMKPEEFAQIQQAIITQMRQAPQTLGEEASRLSKDFDRGNMRFDSRDKIIAQIKLLTPQKLADFFHQAVVEPQGMAILSQIAGSQNGKAEYVHPTGWKVWDNVSALQQTLPLMSEKNE</sequence>
<accession>Q8ZMB5</accession>
<protein>
    <recommendedName>
        <fullName>Protease 3</fullName>
        <ecNumber>3.4.24.55</ecNumber>
    </recommendedName>
    <alternativeName>
        <fullName>Pitrilysin</fullName>
    </alternativeName>
    <alternativeName>
        <fullName>Protease III</fullName>
    </alternativeName>
    <alternativeName>
        <fullName>Protease pi</fullName>
    </alternativeName>
</protein>
<proteinExistence type="inferred from homology"/>
<dbReference type="EC" id="3.4.24.55"/>
<dbReference type="EMBL" id="AE006468">
    <property type="protein sequence ID" value="AAL21871.1"/>
    <property type="molecule type" value="Genomic_DNA"/>
</dbReference>
<dbReference type="RefSeq" id="NP_461912.1">
    <property type="nucleotide sequence ID" value="NC_003197.2"/>
</dbReference>
<dbReference type="RefSeq" id="WP_001138254.1">
    <property type="nucleotide sequence ID" value="NC_003197.2"/>
</dbReference>
<dbReference type="SMR" id="Q8ZMB5"/>
<dbReference type="STRING" id="99287.STM2995"/>
<dbReference type="MEROPS" id="M16.001"/>
<dbReference type="PaxDb" id="99287-STM2995"/>
<dbReference type="GeneID" id="1254518"/>
<dbReference type="KEGG" id="stm:STM2995"/>
<dbReference type="PATRIC" id="fig|99287.12.peg.3169"/>
<dbReference type="HOGENOM" id="CLU_004639_1_3_6"/>
<dbReference type="OMA" id="WIFDEMK"/>
<dbReference type="PhylomeDB" id="Q8ZMB5"/>
<dbReference type="BioCyc" id="SENT99287:STM2995-MONOMER"/>
<dbReference type="Proteomes" id="UP000001014">
    <property type="component" value="Chromosome"/>
</dbReference>
<dbReference type="GO" id="GO:0005737">
    <property type="term" value="C:cytoplasm"/>
    <property type="evidence" value="ECO:0007669"/>
    <property type="project" value="UniProtKB-ARBA"/>
</dbReference>
<dbReference type="GO" id="GO:0042597">
    <property type="term" value="C:periplasmic space"/>
    <property type="evidence" value="ECO:0007669"/>
    <property type="project" value="UniProtKB-SubCell"/>
</dbReference>
<dbReference type="GO" id="GO:0046872">
    <property type="term" value="F:metal ion binding"/>
    <property type="evidence" value="ECO:0007669"/>
    <property type="project" value="UniProtKB-KW"/>
</dbReference>
<dbReference type="GO" id="GO:0004222">
    <property type="term" value="F:metalloendopeptidase activity"/>
    <property type="evidence" value="ECO:0000318"/>
    <property type="project" value="GO_Central"/>
</dbReference>
<dbReference type="GO" id="GO:0006508">
    <property type="term" value="P:proteolysis"/>
    <property type="evidence" value="ECO:0007669"/>
    <property type="project" value="UniProtKB-KW"/>
</dbReference>
<dbReference type="FunFam" id="3.30.830.10:FF:000012">
    <property type="entry name" value="Protease 3"/>
    <property type="match status" value="1"/>
</dbReference>
<dbReference type="Gene3D" id="3.30.830.10">
    <property type="entry name" value="Metalloenzyme, LuxS/M16 peptidase-like"/>
    <property type="match status" value="4"/>
</dbReference>
<dbReference type="InterPro" id="IPR011249">
    <property type="entry name" value="Metalloenz_LuxS/M16"/>
</dbReference>
<dbReference type="InterPro" id="IPR011765">
    <property type="entry name" value="Pept_M16_N"/>
</dbReference>
<dbReference type="InterPro" id="IPR001431">
    <property type="entry name" value="Pept_M16_Zn_BS"/>
</dbReference>
<dbReference type="InterPro" id="IPR050626">
    <property type="entry name" value="Peptidase_M16"/>
</dbReference>
<dbReference type="InterPro" id="IPR007863">
    <property type="entry name" value="Peptidase_M16_C"/>
</dbReference>
<dbReference type="InterPro" id="IPR032632">
    <property type="entry name" value="Peptidase_M16_M"/>
</dbReference>
<dbReference type="InterPro" id="IPR054734">
    <property type="entry name" value="PqqF-like_C_4"/>
</dbReference>
<dbReference type="NCBIfam" id="NF011681">
    <property type="entry name" value="PRK15101.1"/>
    <property type="match status" value="1"/>
</dbReference>
<dbReference type="PANTHER" id="PTHR43690:SF18">
    <property type="entry name" value="INSULIN-DEGRADING ENZYME-RELATED"/>
    <property type="match status" value="1"/>
</dbReference>
<dbReference type="PANTHER" id="PTHR43690">
    <property type="entry name" value="NARDILYSIN"/>
    <property type="match status" value="1"/>
</dbReference>
<dbReference type="Pfam" id="PF00675">
    <property type="entry name" value="Peptidase_M16"/>
    <property type="match status" value="1"/>
</dbReference>
<dbReference type="Pfam" id="PF05193">
    <property type="entry name" value="Peptidase_M16_C"/>
    <property type="match status" value="1"/>
</dbReference>
<dbReference type="Pfam" id="PF16187">
    <property type="entry name" value="Peptidase_M16_M"/>
    <property type="match status" value="1"/>
</dbReference>
<dbReference type="Pfam" id="PF22456">
    <property type="entry name" value="PqqF-like_C_4"/>
    <property type="match status" value="1"/>
</dbReference>
<dbReference type="SUPFAM" id="SSF63411">
    <property type="entry name" value="LuxS/MPP-like metallohydrolase"/>
    <property type="match status" value="4"/>
</dbReference>
<dbReference type="PROSITE" id="PS00143">
    <property type="entry name" value="INSULINASE"/>
    <property type="match status" value="1"/>
</dbReference>
<name>PTRA_SALTY</name>
<organism>
    <name type="scientific">Salmonella typhimurium (strain LT2 / SGSC1412 / ATCC 700720)</name>
    <dbReference type="NCBI Taxonomy" id="99287"/>
    <lineage>
        <taxon>Bacteria</taxon>
        <taxon>Pseudomonadati</taxon>
        <taxon>Pseudomonadota</taxon>
        <taxon>Gammaproteobacteria</taxon>
        <taxon>Enterobacterales</taxon>
        <taxon>Enterobacteriaceae</taxon>
        <taxon>Salmonella</taxon>
    </lineage>
</organism>
<feature type="signal peptide" evidence="1">
    <location>
        <begin position="1"/>
        <end position="23"/>
    </location>
</feature>
<feature type="chain" id="PRO_0000026762" description="Protease 3">
    <location>
        <begin position="24"/>
        <end position="962"/>
    </location>
</feature>
<feature type="active site" description="Proton acceptor" evidence="2">
    <location>
        <position position="91"/>
    </location>
</feature>
<feature type="binding site" evidence="2">
    <location>
        <position position="88"/>
    </location>
    <ligand>
        <name>Zn(2+)</name>
        <dbReference type="ChEBI" id="CHEBI:29105"/>
    </ligand>
</feature>
<feature type="binding site" evidence="2">
    <location>
        <position position="92"/>
    </location>
    <ligand>
        <name>Zn(2+)</name>
        <dbReference type="ChEBI" id="CHEBI:29105"/>
    </ligand>
</feature>
<feature type="binding site" evidence="2">
    <location>
        <position position="169"/>
    </location>
    <ligand>
        <name>Zn(2+)</name>
        <dbReference type="ChEBI" id="CHEBI:29105"/>
    </ligand>
</feature>
<comment type="function">
    <text evidence="1">Endopeptidase that degrades small peptides of less than 7 kDa, such as glucagon and insulin.</text>
</comment>
<comment type="catalytic activity">
    <reaction evidence="2">
        <text>Preferential cleavage of 16-Tyr-|-Leu-17 and 25-Phe-|-Tyr-26 bonds of oxidized insulin B chain. Also acts on other substrates of Mw less than 7 kDa such as insulin and glucagon.</text>
        <dbReference type="EC" id="3.4.24.55"/>
    </reaction>
</comment>
<comment type="cofactor">
    <cofactor evidence="1">
        <name>Zn(2+)</name>
        <dbReference type="ChEBI" id="CHEBI:29105"/>
    </cofactor>
    <text evidence="1">Binds 1 zinc ion per subunit.</text>
</comment>
<comment type="subunit">
    <text evidence="1">Monomer.</text>
</comment>
<comment type="subcellular location">
    <subcellularLocation>
        <location evidence="1">Periplasm</location>
    </subcellularLocation>
</comment>
<comment type="similarity">
    <text evidence="3">Belongs to the peptidase M16 family.</text>
</comment>
<gene>
    <name type="primary">ptrA</name>
    <name type="synonym">ptr</name>
    <name type="ordered locus">STM2995</name>
</gene>
<evidence type="ECO:0000250" key="1"/>
<evidence type="ECO:0000255" key="2">
    <source>
        <dbReference type="PROSITE-ProRule" id="PRU10096"/>
    </source>
</evidence>
<evidence type="ECO:0000305" key="3"/>